<evidence type="ECO:0000255" key="1">
    <source>
        <dbReference type="HAMAP-Rule" id="MF_00488"/>
    </source>
</evidence>
<evidence type="ECO:0000305" key="2"/>
<dbReference type="EC" id="1.1.1.27" evidence="1"/>
<dbReference type="EMBL" id="AY312243">
    <property type="protein sequence ID" value="AAP76389.1"/>
    <property type="molecule type" value="Genomic_DNA"/>
</dbReference>
<dbReference type="RefSeq" id="WP_011283934.1">
    <property type="nucleotide sequence ID" value="NZ_WTQC01000001.1"/>
</dbReference>
<dbReference type="SMR" id="P0C0J4"/>
<dbReference type="OMA" id="THLDSMR"/>
<dbReference type="UniPathway" id="UPA00554">
    <property type="reaction ID" value="UER00611"/>
</dbReference>
<dbReference type="GO" id="GO:0005737">
    <property type="term" value="C:cytoplasm"/>
    <property type="evidence" value="ECO:0007669"/>
    <property type="project" value="UniProtKB-SubCell"/>
</dbReference>
<dbReference type="GO" id="GO:0004459">
    <property type="term" value="F:L-lactate dehydrogenase activity"/>
    <property type="evidence" value="ECO:0007669"/>
    <property type="project" value="UniProtKB-UniRule"/>
</dbReference>
<dbReference type="GO" id="GO:0006096">
    <property type="term" value="P:glycolytic process"/>
    <property type="evidence" value="ECO:0007669"/>
    <property type="project" value="UniProtKB-UniRule"/>
</dbReference>
<dbReference type="GO" id="GO:0006089">
    <property type="term" value="P:lactate metabolic process"/>
    <property type="evidence" value="ECO:0007669"/>
    <property type="project" value="TreeGrafter"/>
</dbReference>
<dbReference type="CDD" id="cd05291">
    <property type="entry name" value="HicDH_like"/>
    <property type="match status" value="1"/>
</dbReference>
<dbReference type="Gene3D" id="3.90.110.10">
    <property type="entry name" value="Lactate dehydrogenase/glycoside hydrolase, family 4, C-terminal"/>
    <property type="match status" value="1"/>
</dbReference>
<dbReference type="Gene3D" id="3.40.50.720">
    <property type="entry name" value="NAD(P)-binding Rossmann-like Domain"/>
    <property type="match status" value="1"/>
</dbReference>
<dbReference type="HAMAP" id="MF_00488">
    <property type="entry name" value="Lactate_dehydrog"/>
    <property type="match status" value="1"/>
</dbReference>
<dbReference type="InterPro" id="IPR001557">
    <property type="entry name" value="L-lactate/malate_DH"/>
</dbReference>
<dbReference type="InterPro" id="IPR011304">
    <property type="entry name" value="L-lactate_DH"/>
</dbReference>
<dbReference type="InterPro" id="IPR018177">
    <property type="entry name" value="L-lactate_DH_AS"/>
</dbReference>
<dbReference type="InterPro" id="IPR022383">
    <property type="entry name" value="Lactate/malate_DH_C"/>
</dbReference>
<dbReference type="InterPro" id="IPR001236">
    <property type="entry name" value="Lactate/malate_DH_N"/>
</dbReference>
<dbReference type="InterPro" id="IPR015955">
    <property type="entry name" value="Lactate_DH/Glyco_Ohase_4_C"/>
</dbReference>
<dbReference type="InterPro" id="IPR036291">
    <property type="entry name" value="NAD(P)-bd_dom_sf"/>
</dbReference>
<dbReference type="NCBIfam" id="TIGR01771">
    <property type="entry name" value="L-LDH-NAD"/>
    <property type="match status" value="1"/>
</dbReference>
<dbReference type="PANTHER" id="PTHR43128">
    <property type="entry name" value="L-2-HYDROXYCARBOXYLATE DEHYDROGENASE (NAD(P)(+))"/>
    <property type="match status" value="1"/>
</dbReference>
<dbReference type="PANTHER" id="PTHR43128:SF16">
    <property type="entry name" value="L-LACTATE DEHYDROGENASE"/>
    <property type="match status" value="1"/>
</dbReference>
<dbReference type="Pfam" id="PF02866">
    <property type="entry name" value="Ldh_1_C"/>
    <property type="match status" value="1"/>
</dbReference>
<dbReference type="Pfam" id="PF00056">
    <property type="entry name" value="Ldh_1_N"/>
    <property type="match status" value="1"/>
</dbReference>
<dbReference type="PIRSF" id="PIRSF000102">
    <property type="entry name" value="Lac_mal_DH"/>
    <property type="match status" value="1"/>
</dbReference>
<dbReference type="PRINTS" id="PR00086">
    <property type="entry name" value="LLDHDRGNASE"/>
</dbReference>
<dbReference type="SUPFAM" id="SSF56327">
    <property type="entry name" value="LDH C-terminal domain-like"/>
    <property type="match status" value="1"/>
</dbReference>
<dbReference type="SUPFAM" id="SSF51735">
    <property type="entry name" value="NAD(P)-binding Rossmann-fold domains"/>
    <property type="match status" value="1"/>
</dbReference>
<dbReference type="PROSITE" id="PS00064">
    <property type="entry name" value="L_LDH"/>
    <property type="match status" value="1"/>
</dbReference>
<keyword id="KW-0963">Cytoplasm</keyword>
<keyword id="KW-0520">NAD</keyword>
<keyword id="KW-0560">Oxidoreductase</keyword>
<keyword id="KW-0597">Phosphoprotein</keyword>
<name>LDH_MESHO</name>
<feature type="chain" id="PRO_0000168369" description="L-lactate dehydrogenase">
    <location>
        <begin position="1"/>
        <end position="315"/>
    </location>
</feature>
<feature type="active site" description="Proton acceptor" evidence="1">
    <location>
        <position position="176"/>
    </location>
</feature>
<feature type="binding site" evidence="1">
    <location>
        <position position="14"/>
    </location>
    <ligand>
        <name>NAD(+)</name>
        <dbReference type="ChEBI" id="CHEBI:57540"/>
    </ligand>
</feature>
<feature type="binding site" evidence="1">
    <location>
        <position position="35"/>
    </location>
    <ligand>
        <name>NAD(+)</name>
        <dbReference type="ChEBI" id="CHEBI:57540"/>
    </ligand>
</feature>
<feature type="binding site" evidence="1">
    <location>
        <position position="66"/>
    </location>
    <ligand>
        <name>NAD(+)</name>
        <dbReference type="ChEBI" id="CHEBI:57540"/>
    </ligand>
</feature>
<feature type="binding site" evidence="1">
    <location>
        <position position="83"/>
    </location>
    <ligand>
        <name>substrate</name>
    </ligand>
</feature>
<feature type="binding site" evidence="1">
    <location>
        <position position="89"/>
    </location>
    <ligand>
        <name>substrate</name>
    </ligand>
</feature>
<feature type="binding site" evidence="1">
    <location>
        <begin position="119"/>
        <end position="121"/>
    </location>
    <ligand>
        <name>NAD(+)</name>
        <dbReference type="ChEBI" id="CHEBI:57540"/>
    </ligand>
</feature>
<feature type="binding site" evidence="1">
    <location>
        <begin position="121"/>
        <end position="124"/>
    </location>
    <ligand>
        <name>substrate</name>
    </ligand>
</feature>
<feature type="binding site" evidence="1">
    <location>
        <position position="144"/>
    </location>
    <ligand>
        <name>NAD(+)</name>
        <dbReference type="ChEBI" id="CHEBI:57540"/>
    </ligand>
</feature>
<feature type="binding site" evidence="1">
    <location>
        <begin position="149"/>
        <end position="152"/>
    </location>
    <ligand>
        <name>substrate</name>
    </ligand>
</feature>
<feature type="binding site" evidence="1">
    <location>
        <position position="230"/>
    </location>
    <ligand>
        <name>substrate</name>
    </ligand>
</feature>
<feature type="modified residue" description="Phosphotyrosine" evidence="1">
    <location>
        <position position="221"/>
    </location>
</feature>
<accession>P0C0J4</accession>
<accession>P33572</accession>
<accession>Q601F7</accession>
<comment type="function">
    <text evidence="1">Catalyzes the conversion of lactate to pyruvate.</text>
</comment>
<comment type="catalytic activity">
    <reaction evidence="1">
        <text>(S)-lactate + NAD(+) = pyruvate + NADH + H(+)</text>
        <dbReference type="Rhea" id="RHEA:23444"/>
        <dbReference type="ChEBI" id="CHEBI:15361"/>
        <dbReference type="ChEBI" id="CHEBI:15378"/>
        <dbReference type="ChEBI" id="CHEBI:16651"/>
        <dbReference type="ChEBI" id="CHEBI:57540"/>
        <dbReference type="ChEBI" id="CHEBI:57945"/>
        <dbReference type="EC" id="1.1.1.27"/>
    </reaction>
</comment>
<comment type="pathway">
    <text evidence="1">Fermentation; pyruvate fermentation to lactate; (S)-lactate from pyruvate: step 1/1.</text>
</comment>
<comment type="subunit">
    <text evidence="1">Homotetramer.</text>
</comment>
<comment type="subcellular location">
    <subcellularLocation>
        <location evidence="1">Cytoplasm</location>
    </subcellularLocation>
</comment>
<comment type="similarity">
    <text evidence="1 2">Belongs to the LDH/MDH superfamily. LDH family.</text>
</comment>
<proteinExistence type="inferred from homology"/>
<reference key="1">
    <citation type="submission" date="2003-06" db="EMBL/GenBank/DDBJ databases">
        <title>Cloning and expression of p36 gene of Mycoplasma hyopneumoniae.</title>
        <authorList>
            <person name="Hu M."/>
            <person name="Jiao X."/>
            <person name="Zhang X."/>
            <person name="Pan Z."/>
            <person name="Huang J."/>
            <person name="Yin Y."/>
            <person name="Zhang X."/>
            <person name="Shao G."/>
            <person name="Liu W."/>
            <person name="Liu X."/>
            <person name="Jiao F."/>
        </authorList>
    </citation>
    <scope>NUCLEOTIDE SEQUENCE [GENOMIC DNA]</scope>
    <source>
        <strain>ZCF23</strain>
    </source>
</reference>
<organism>
    <name type="scientific">Mesomycoplasma hyopneumoniae</name>
    <name type="common">Mycoplasma hyopneumoniae</name>
    <dbReference type="NCBI Taxonomy" id="2099"/>
    <lineage>
        <taxon>Bacteria</taxon>
        <taxon>Bacillati</taxon>
        <taxon>Mycoplasmatota</taxon>
        <taxon>Mycoplasmoidales</taxon>
        <taxon>Metamycoplasmataceae</taxon>
        <taxon>Mesomycoplasma</taxon>
    </lineage>
</organism>
<sequence length="315" mass="34238">MKPIKIALIGAGNVGNSFLYAAMNQGLASEYGIIDINPDFADGNAFDFEDASASLPFPISVSRYEYKDLKDADFIVITAGRPQKPGETRLELVADNIRIIREIALKVKESGFSGISIIVANPVDIITRAYRDASGFSDQKVIGSGTVLDTARLQFAIAKRAKVSPNSVQAYVMGEHGDSSFVAYSNIKIAGECFCAYSKLTGIDSSNYEKELEYPVSRRAYEIINRKRATFYGIGAAIAKIVSNIIKDTKNIMIAGANLRGEYGFHGVNIGVPVVLGANGIEKIIEISLNDKEKEKFAKSVAIIDKIYQDAIKNI</sequence>
<protein>
    <recommendedName>
        <fullName evidence="1">L-lactate dehydrogenase</fullName>
        <shortName evidence="1">L-LDH</shortName>
        <ecNumber evidence="1">1.1.1.27</ecNumber>
    </recommendedName>
    <alternativeName>
        <fullName>Immunogenic protein p36</fullName>
    </alternativeName>
</protein>
<gene>
    <name evidence="1" type="primary">ldh</name>
    <name type="synonym">ictD</name>
</gene>